<keyword id="KW-0378">Hydrolase</keyword>
<keyword id="KW-1185">Reference proteome</keyword>
<reference key="1">
    <citation type="journal article" date="2013" name="Plant Physiol.">
        <title>A Nostoc punctiforme Sugar Transporter Necessary to Establish a Cyanobacterium-Plant Symbiosis.</title>
        <authorList>
            <person name="Ekman M."/>
            <person name="Picossi S."/>
            <person name="Campbell E.L."/>
            <person name="Meeks J.C."/>
            <person name="Flores E."/>
        </authorList>
    </citation>
    <scope>NUCLEOTIDE SEQUENCE [LARGE SCALE GENOMIC DNA]</scope>
    <source>
        <strain>ATCC 29133 / PCC 73102</strain>
    </source>
</reference>
<evidence type="ECO:0000255" key="1">
    <source>
        <dbReference type="HAMAP-Rule" id="MF_02101"/>
    </source>
</evidence>
<organism>
    <name type="scientific">Nostoc punctiforme (strain ATCC 29133 / PCC 73102)</name>
    <dbReference type="NCBI Taxonomy" id="63737"/>
    <lineage>
        <taxon>Bacteria</taxon>
        <taxon>Bacillati</taxon>
        <taxon>Cyanobacteriota</taxon>
        <taxon>Cyanophyceae</taxon>
        <taxon>Nostocales</taxon>
        <taxon>Nostocaceae</taxon>
        <taxon>Nostoc</taxon>
    </lineage>
</organism>
<proteinExistence type="inferred from homology"/>
<protein>
    <recommendedName>
        <fullName evidence="1">1,4-dihydroxy-2-naphthoyl-CoA hydrolase</fullName>
        <shortName evidence="1">DHNA-CoA hydrolase</shortName>
        <ecNumber evidence="1">3.1.2.28</ecNumber>
    </recommendedName>
    <alternativeName>
        <fullName evidence="1">DHNA-CoA thioesterase</fullName>
    </alternativeName>
</protein>
<comment type="function">
    <text evidence="1">Catalyzes the hydrolysis of 1,4-dihydroxy-2-naphthoyl-CoA (DHNA-CoA) to 1,4-dihydroxy-2-naphthoate (DHNA), a reaction involved in phylloquinone (vitamin K1) biosynthesis.</text>
</comment>
<comment type="catalytic activity">
    <reaction evidence="1">
        <text>1,4-dihydroxy-2-naphthoyl-CoA + H2O = 1,4-dihydroxy-2-naphthoate + CoA + H(+)</text>
        <dbReference type="Rhea" id="RHEA:26309"/>
        <dbReference type="ChEBI" id="CHEBI:11173"/>
        <dbReference type="ChEBI" id="CHEBI:15377"/>
        <dbReference type="ChEBI" id="CHEBI:15378"/>
        <dbReference type="ChEBI" id="CHEBI:57287"/>
        <dbReference type="ChEBI" id="CHEBI:58897"/>
        <dbReference type="EC" id="3.1.2.28"/>
    </reaction>
</comment>
<comment type="pathway">
    <text evidence="1">Cofactor biosynthesis; phylloquinone biosynthesis.</text>
</comment>
<comment type="pathway">
    <text evidence="1">Quinol/quinone metabolism; 1,4-dihydroxy-2-naphthoate biosynthesis; 1,4-dihydroxy-2-naphthoate from chorismate: step 7/7.</text>
</comment>
<comment type="similarity">
    <text evidence="1">Belongs to the 4-hydroxybenzoyl-CoA thioesterase family. DHNA-CoA hydrolase subfamily.</text>
</comment>
<accession>B2IZ83</accession>
<gene>
    <name type="ordered locus">Npun_F6457</name>
</gene>
<dbReference type="EC" id="3.1.2.28" evidence="1"/>
<dbReference type="EMBL" id="CP001037">
    <property type="protein sequence ID" value="ACC84725.1"/>
    <property type="molecule type" value="Genomic_DNA"/>
</dbReference>
<dbReference type="RefSeq" id="WP_012412661.1">
    <property type="nucleotide sequence ID" value="NC_010628.1"/>
</dbReference>
<dbReference type="SMR" id="B2IZ83"/>
<dbReference type="STRING" id="63737.Npun_F6457"/>
<dbReference type="DNASU" id="6255802"/>
<dbReference type="EnsemblBacteria" id="ACC84725">
    <property type="protein sequence ID" value="ACC84725"/>
    <property type="gene ID" value="Npun_F6457"/>
</dbReference>
<dbReference type="KEGG" id="npu:Npun_F6457"/>
<dbReference type="eggNOG" id="COG0824">
    <property type="taxonomic scope" value="Bacteria"/>
</dbReference>
<dbReference type="HOGENOM" id="CLU_101141_5_3_3"/>
<dbReference type="OrthoDB" id="9800856at2"/>
<dbReference type="PhylomeDB" id="B2IZ83"/>
<dbReference type="UniPathway" id="UPA00995"/>
<dbReference type="UniPathway" id="UPA01057">
    <property type="reaction ID" value="UER01033"/>
</dbReference>
<dbReference type="Proteomes" id="UP000001191">
    <property type="component" value="Chromosome"/>
</dbReference>
<dbReference type="GO" id="GO:0061522">
    <property type="term" value="F:1,4-dihydroxy-2-naphthoyl-CoA thioesterase activity"/>
    <property type="evidence" value="ECO:0007669"/>
    <property type="project" value="UniProtKB-EC"/>
</dbReference>
<dbReference type="GO" id="GO:0047617">
    <property type="term" value="F:fatty acyl-CoA hydrolase activity"/>
    <property type="evidence" value="ECO:0007669"/>
    <property type="project" value="TreeGrafter"/>
</dbReference>
<dbReference type="GO" id="GO:0042372">
    <property type="term" value="P:phylloquinone biosynthetic process"/>
    <property type="evidence" value="ECO:0007669"/>
    <property type="project" value="UniProtKB-UniRule"/>
</dbReference>
<dbReference type="CDD" id="cd00586">
    <property type="entry name" value="4HBT"/>
    <property type="match status" value="1"/>
</dbReference>
<dbReference type="Gene3D" id="3.10.129.10">
    <property type="entry name" value="Hotdog Thioesterase"/>
    <property type="match status" value="1"/>
</dbReference>
<dbReference type="HAMAP" id="MF_02101">
    <property type="entry name" value="DHNA_CoA_hydrolase"/>
    <property type="match status" value="1"/>
</dbReference>
<dbReference type="InterPro" id="IPR050563">
    <property type="entry name" value="4-hydroxybenzoyl-CoA_TE"/>
</dbReference>
<dbReference type="InterPro" id="IPR022829">
    <property type="entry name" value="DHNA_CoA_hydrolase"/>
</dbReference>
<dbReference type="InterPro" id="IPR029069">
    <property type="entry name" value="HotDog_dom_sf"/>
</dbReference>
<dbReference type="PANTHER" id="PTHR31793">
    <property type="entry name" value="4-HYDROXYBENZOYL-COA THIOESTERASE FAMILY MEMBER"/>
    <property type="match status" value="1"/>
</dbReference>
<dbReference type="PANTHER" id="PTHR31793:SF37">
    <property type="entry name" value="ACYL-COA THIOESTER HYDROLASE YBGC"/>
    <property type="match status" value="1"/>
</dbReference>
<dbReference type="Pfam" id="PF13279">
    <property type="entry name" value="4HBT_2"/>
    <property type="match status" value="1"/>
</dbReference>
<dbReference type="SUPFAM" id="SSF54637">
    <property type="entry name" value="Thioesterase/thiol ester dehydrase-isomerase"/>
    <property type="match status" value="1"/>
</dbReference>
<feature type="chain" id="PRO_0000377014" description="1,4-dihydroxy-2-naphthoyl-CoA hydrolase">
    <location>
        <begin position="1"/>
        <end position="148"/>
    </location>
</feature>
<feature type="active site" evidence="1">
    <location>
        <position position="15"/>
    </location>
</feature>
<name>DNCH_NOSP7</name>
<sequence>MSFTYNRTVRFQDTDAAGVVYFANVLGICHEAYEESLEASSINLKDFFTNPSVAFPIVHASVDFLRPMFVGDKLLISLIPQKIGVEKFEITYEVTVAEVVVAKAITRHVCIDASSRSKQELPDEIVQWLETNRRDAEGAERRRSREIM</sequence>